<protein>
    <recommendedName>
        <fullName evidence="1">Cobyric acid synthase</fullName>
    </recommendedName>
</protein>
<evidence type="ECO:0000255" key="1">
    <source>
        <dbReference type="HAMAP-Rule" id="MF_00028"/>
    </source>
</evidence>
<name>COBQ_SINMW</name>
<comment type="function">
    <text evidence="1">Catalyzes amidations at positions B, D, E, and G on adenosylcobyrinic A,C-diamide. NH(2) groups are provided by glutamine, and one molecule of ATP is hydrogenolyzed for each amidation.</text>
</comment>
<comment type="pathway">
    <text evidence="1">Cofactor biosynthesis; adenosylcobalamin biosynthesis.</text>
</comment>
<comment type="similarity">
    <text evidence="1">Belongs to the CobB/CobQ family. CobQ subfamily.</text>
</comment>
<keyword id="KW-0169">Cobalamin biosynthesis</keyword>
<keyword id="KW-0315">Glutamine amidotransferase</keyword>
<gene>
    <name evidence="1" type="primary">cobQ</name>
    <name type="ordered locus">Smed_1765</name>
</gene>
<dbReference type="EMBL" id="CP000738">
    <property type="protein sequence ID" value="ABR60600.1"/>
    <property type="molecule type" value="Genomic_DNA"/>
</dbReference>
<dbReference type="RefSeq" id="WP_011975903.1">
    <property type="nucleotide sequence ID" value="NC_009636.1"/>
</dbReference>
<dbReference type="RefSeq" id="YP_001327435.1">
    <property type="nucleotide sequence ID" value="NC_009636.1"/>
</dbReference>
<dbReference type="SMR" id="A6UAC0"/>
<dbReference type="STRING" id="366394.Smed_1765"/>
<dbReference type="KEGG" id="smd:Smed_1765"/>
<dbReference type="PATRIC" id="fig|366394.8.peg.4906"/>
<dbReference type="eggNOG" id="COG1492">
    <property type="taxonomic scope" value="Bacteria"/>
</dbReference>
<dbReference type="HOGENOM" id="CLU_019250_2_2_5"/>
<dbReference type="OrthoDB" id="9808302at2"/>
<dbReference type="UniPathway" id="UPA00148"/>
<dbReference type="Proteomes" id="UP000001108">
    <property type="component" value="Chromosome"/>
</dbReference>
<dbReference type="GO" id="GO:0015420">
    <property type="term" value="F:ABC-type vitamin B12 transporter activity"/>
    <property type="evidence" value="ECO:0007669"/>
    <property type="project" value="UniProtKB-UniRule"/>
</dbReference>
<dbReference type="GO" id="GO:0003824">
    <property type="term" value="F:catalytic activity"/>
    <property type="evidence" value="ECO:0007669"/>
    <property type="project" value="InterPro"/>
</dbReference>
<dbReference type="GO" id="GO:0009236">
    <property type="term" value="P:cobalamin biosynthetic process"/>
    <property type="evidence" value="ECO:0007669"/>
    <property type="project" value="UniProtKB-UniRule"/>
</dbReference>
<dbReference type="CDD" id="cd05389">
    <property type="entry name" value="CobQ_N"/>
    <property type="match status" value="1"/>
</dbReference>
<dbReference type="CDD" id="cd01750">
    <property type="entry name" value="GATase1_CobQ"/>
    <property type="match status" value="1"/>
</dbReference>
<dbReference type="Gene3D" id="3.40.50.880">
    <property type="match status" value="1"/>
</dbReference>
<dbReference type="Gene3D" id="3.40.50.300">
    <property type="entry name" value="P-loop containing nucleotide triphosphate hydrolases"/>
    <property type="match status" value="1"/>
</dbReference>
<dbReference type="HAMAP" id="MF_00028">
    <property type="entry name" value="CobQ"/>
    <property type="match status" value="1"/>
</dbReference>
<dbReference type="InterPro" id="IPR029062">
    <property type="entry name" value="Class_I_gatase-like"/>
</dbReference>
<dbReference type="InterPro" id="IPR002586">
    <property type="entry name" value="CobQ/CobB/MinD/ParA_Nub-bd_dom"/>
</dbReference>
<dbReference type="InterPro" id="IPR033949">
    <property type="entry name" value="CobQ_GATase1"/>
</dbReference>
<dbReference type="InterPro" id="IPR047045">
    <property type="entry name" value="CobQ_N"/>
</dbReference>
<dbReference type="InterPro" id="IPR004459">
    <property type="entry name" value="CobQ_synth"/>
</dbReference>
<dbReference type="InterPro" id="IPR011698">
    <property type="entry name" value="GATase_3"/>
</dbReference>
<dbReference type="InterPro" id="IPR027417">
    <property type="entry name" value="P-loop_NTPase"/>
</dbReference>
<dbReference type="NCBIfam" id="TIGR00313">
    <property type="entry name" value="cobQ"/>
    <property type="match status" value="1"/>
</dbReference>
<dbReference type="NCBIfam" id="NF001989">
    <property type="entry name" value="PRK00784.1"/>
    <property type="match status" value="1"/>
</dbReference>
<dbReference type="PANTHER" id="PTHR21343:SF1">
    <property type="entry name" value="COBYRIC ACID SYNTHASE"/>
    <property type="match status" value="1"/>
</dbReference>
<dbReference type="PANTHER" id="PTHR21343">
    <property type="entry name" value="DETHIOBIOTIN SYNTHETASE"/>
    <property type="match status" value="1"/>
</dbReference>
<dbReference type="Pfam" id="PF01656">
    <property type="entry name" value="CbiA"/>
    <property type="match status" value="1"/>
</dbReference>
<dbReference type="Pfam" id="PF07685">
    <property type="entry name" value="GATase_3"/>
    <property type="match status" value="1"/>
</dbReference>
<dbReference type="SUPFAM" id="SSF52317">
    <property type="entry name" value="Class I glutamine amidotransferase-like"/>
    <property type="match status" value="1"/>
</dbReference>
<dbReference type="SUPFAM" id="SSF52540">
    <property type="entry name" value="P-loop containing nucleoside triphosphate hydrolases"/>
    <property type="match status" value="1"/>
</dbReference>
<dbReference type="PROSITE" id="PS51274">
    <property type="entry name" value="GATASE_COBBQ"/>
    <property type="match status" value="1"/>
</dbReference>
<feature type="chain" id="PRO_1000002378" description="Cobyric acid synthase">
    <location>
        <begin position="1"/>
        <end position="484"/>
    </location>
</feature>
<feature type="domain" description="GATase cobBQ-type" evidence="1">
    <location>
        <begin position="251"/>
        <end position="438"/>
    </location>
</feature>
<feature type="active site" description="Nucleophile" evidence="1">
    <location>
        <position position="333"/>
    </location>
</feature>
<feature type="active site" evidence="1">
    <location>
        <position position="430"/>
    </location>
</feature>
<accession>A6UAC0</accession>
<reference key="1">
    <citation type="submission" date="2007-06" db="EMBL/GenBank/DDBJ databases">
        <title>Complete sequence of Sinorhizobium medicae WSM419 chromosome.</title>
        <authorList>
            <consortium name="US DOE Joint Genome Institute"/>
            <person name="Copeland A."/>
            <person name="Lucas S."/>
            <person name="Lapidus A."/>
            <person name="Barry K."/>
            <person name="Glavina del Rio T."/>
            <person name="Dalin E."/>
            <person name="Tice H."/>
            <person name="Pitluck S."/>
            <person name="Chain P."/>
            <person name="Malfatti S."/>
            <person name="Shin M."/>
            <person name="Vergez L."/>
            <person name="Schmutz J."/>
            <person name="Larimer F."/>
            <person name="Land M."/>
            <person name="Hauser L."/>
            <person name="Kyrpides N."/>
            <person name="Mikhailova N."/>
            <person name="Reeve W.G."/>
            <person name="Richardson P."/>
        </authorList>
    </citation>
    <scope>NUCLEOTIDE SEQUENCE [LARGE SCALE GENOMIC DNA]</scope>
    <source>
        <strain>WSM419</strain>
    </source>
</reference>
<sequence>MTRKIMLQGTGSDVGKSVLVAGLCRLASNRGLSVKPFKPQNMSNNAAVSDDGGEIGRAQWLQALAARVPSSVHMNPVLLKPQSDVGSQVVVQGRVAGQARGKEYQALKPGLLGSVMESFELVSAGADLVIVEGAGSPAEINLRAGDIANMGFATRAGVPVVLVGDIDRGGVIASLVGTHAILSDEDRRMVTGYLINKFRGDVTLFDDGIASIRTFTGWPCFGVVPWLKSAGRLPAEDSVVLERLARGGGKALKVAVPVLSRIANFDDLDPLAAEPDVEIVFVRPGTPLPDDAALVVIPGSKSTIADLEDFRRQGWDRDLDRHIRRGGRVIGICGGYQMLGTRVIDPLGIEGGKREIEGLGLLSVETEMAPEKTVRNSRAWSREYGVLLEGYEIHLGRTAGIDCGRAPVEIDGRRDGAMSADGRVMGTYLHGLFGSDPYRAELLRSFGIEGGGGNYRQSVDAALDEIAAELDAVLDRVWLETLLG</sequence>
<proteinExistence type="inferred from homology"/>
<organism>
    <name type="scientific">Sinorhizobium medicae (strain WSM419)</name>
    <name type="common">Ensifer medicae</name>
    <dbReference type="NCBI Taxonomy" id="366394"/>
    <lineage>
        <taxon>Bacteria</taxon>
        <taxon>Pseudomonadati</taxon>
        <taxon>Pseudomonadota</taxon>
        <taxon>Alphaproteobacteria</taxon>
        <taxon>Hyphomicrobiales</taxon>
        <taxon>Rhizobiaceae</taxon>
        <taxon>Sinorhizobium/Ensifer group</taxon>
        <taxon>Sinorhizobium</taxon>
    </lineage>
</organism>